<dbReference type="EC" id="1.17.7.3" evidence="1"/>
<dbReference type="EMBL" id="CP000538">
    <property type="protein sequence ID" value="EAQ72491.1"/>
    <property type="molecule type" value="Genomic_DNA"/>
</dbReference>
<dbReference type="RefSeq" id="WP_002854766.1">
    <property type="nucleotide sequence ID" value="NC_008787.1"/>
</dbReference>
<dbReference type="SMR" id="A1VZ41"/>
<dbReference type="KEGG" id="cjj:CJJ81176_0709"/>
<dbReference type="eggNOG" id="COG0821">
    <property type="taxonomic scope" value="Bacteria"/>
</dbReference>
<dbReference type="HOGENOM" id="CLU_042258_0_0_7"/>
<dbReference type="UniPathway" id="UPA00056">
    <property type="reaction ID" value="UER00096"/>
</dbReference>
<dbReference type="Proteomes" id="UP000000646">
    <property type="component" value="Chromosome"/>
</dbReference>
<dbReference type="GO" id="GO:0051539">
    <property type="term" value="F:4 iron, 4 sulfur cluster binding"/>
    <property type="evidence" value="ECO:0007669"/>
    <property type="project" value="UniProtKB-UniRule"/>
</dbReference>
<dbReference type="GO" id="GO:0046429">
    <property type="term" value="F:4-hydroxy-3-methylbut-2-en-1-yl diphosphate synthase activity (ferredoxin)"/>
    <property type="evidence" value="ECO:0007669"/>
    <property type="project" value="UniProtKB-UniRule"/>
</dbReference>
<dbReference type="GO" id="GO:0141197">
    <property type="term" value="F:4-hydroxy-3-methylbut-2-enyl-diphosphate synthase activity (flavodoxin)"/>
    <property type="evidence" value="ECO:0007669"/>
    <property type="project" value="UniProtKB-EC"/>
</dbReference>
<dbReference type="GO" id="GO:0005506">
    <property type="term" value="F:iron ion binding"/>
    <property type="evidence" value="ECO:0007669"/>
    <property type="project" value="InterPro"/>
</dbReference>
<dbReference type="GO" id="GO:0019288">
    <property type="term" value="P:isopentenyl diphosphate biosynthetic process, methylerythritol 4-phosphate pathway"/>
    <property type="evidence" value="ECO:0007669"/>
    <property type="project" value="UniProtKB-UniRule"/>
</dbReference>
<dbReference type="GO" id="GO:0016114">
    <property type="term" value="P:terpenoid biosynthetic process"/>
    <property type="evidence" value="ECO:0007669"/>
    <property type="project" value="InterPro"/>
</dbReference>
<dbReference type="FunFam" id="3.20.20.20:FF:000001">
    <property type="entry name" value="4-hydroxy-3-methylbut-2-en-1-yl diphosphate synthase (flavodoxin)"/>
    <property type="match status" value="1"/>
</dbReference>
<dbReference type="Gene3D" id="3.20.20.20">
    <property type="entry name" value="Dihydropteroate synthase-like"/>
    <property type="match status" value="1"/>
</dbReference>
<dbReference type="Gene3D" id="3.30.413.10">
    <property type="entry name" value="Sulfite Reductase Hemoprotein, domain 1"/>
    <property type="match status" value="1"/>
</dbReference>
<dbReference type="HAMAP" id="MF_00159">
    <property type="entry name" value="IspG"/>
    <property type="match status" value="1"/>
</dbReference>
<dbReference type="InterPro" id="IPR011005">
    <property type="entry name" value="Dihydropteroate_synth-like_sf"/>
</dbReference>
<dbReference type="InterPro" id="IPR016425">
    <property type="entry name" value="IspG_bac"/>
</dbReference>
<dbReference type="InterPro" id="IPR004588">
    <property type="entry name" value="IspG_bac-typ"/>
</dbReference>
<dbReference type="InterPro" id="IPR045854">
    <property type="entry name" value="NO2/SO3_Rdtase_4Fe4S_sf"/>
</dbReference>
<dbReference type="NCBIfam" id="TIGR00612">
    <property type="entry name" value="ispG_gcpE"/>
    <property type="match status" value="1"/>
</dbReference>
<dbReference type="NCBIfam" id="NF001540">
    <property type="entry name" value="PRK00366.1"/>
    <property type="match status" value="1"/>
</dbReference>
<dbReference type="PANTHER" id="PTHR30454">
    <property type="entry name" value="4-HYDROXY-3-METHYLBUT-2-EN-1-YL DIPHOSPHATE SYNTHASE"/>
    <property type="match status" value="1"/>
</dbReference>
<dbReference type="PANTHER" id="PTHR30454:SF0">
    <property type="entry name" value="4-HYDROXY-3-METHYLBUT-2-EN-1-YL DIPHOSPHATE SYNTHASE (FERREDOXIN), CHLOROPLASTIC"/>
    <property type="match status" value="1"/>
</dbReference>
<dbReference type="Pfam" id="PF04551">
    <property type="entry name" value="GcpE"/>
    <property type="match status" value="1"/>
</dbReference>
<dbReference type="PIRSF" id="PIRSF004640">
    <property type="entry name" value="IspG"/>
    <property type="match status" value="1"/>
</dbReference>
<dbReference type="SUPFAM" id="SSF51717">
    <property type="entry name" value="Dihydropteroate synthetase-like"/>
    <property type="match status" value="1"/>
</dbReference>
<dbReference type="SUPFAM" id="SSF56014">
    <property type="entry name" value="Nitrite and sulphite reductase 4Fe-4S domain-like"/>
    <property type="match status" value="1"/>
</dbReference>
<proteinExistence type="inferred from homology"/>
<feature type="chain" id="PRO_1000011453" description="4-hydroxy-3-methylbut-2-en-1-yl diphosphate synthase (flavodoxin)">
    <location>
        <begin position="1"/>
        <end position="357"/>
    </location>
</feature>
<feature type="binding site" evidence="1">
    <location>
        <position position="264"/>
    </location>
    <ligand>
        <name>[4Fe-4S] cluster</name>
        <dbReference type="ChEBI" id="CHEBI:49883"/>
    </ligand>
</feature>
<feature type="binding site" evidence="1">
    <location>
        <position position="267"/>
    </location>
    <ligand>
        <name>[4Fe-4S] cluster</name>
        <dbReference type="ChEBI" id="CHEBI:49883"/>
    </ligand>
</feature>
<feature type="binding site" evidence="1">
    <location>
        <position position="299"/>
    </location>
    <ligand>
        <name>[4Fe-4S] cluster</name>
        <dbReference type="ChEBI" id="CHEBI:49883"/>
    </ligand>
</feature>
<feature type="binding site" evidence="1">
    <location>
        <position position="306"/>
    </location>
    <ligand>
        <name>[4Fe-4S] cluster</name>
        <dbReference type="ChEBI" id="CHEBI:49883"/>
    </ligand>
</feature>
<gene>
    <name evidence="1" type="primary">ispG</name>
    <name type="ordered locus">CJJ81176_0709</name>
</gene>
<reference key="1">
    <citation type="submission" date="2006-12" db="EMBL/GenBank/DDBJ databases">
        <authorList>
            <person name="Fouts D.E."/>
            <person name="Nelson K.E."/>
            <person name="Sebastian Y."/>
        </authorList>
    </citation>
    <scope>NUCLEOTIDE SEQUENCE [LARGE SCALE GENOMIC DNA]</scope>
    <source>
        <strain>81-176</strain>
    </source>
</reference>
<accession>A1VZ41</accession>
<evidence type="ECO:0000255" key="1">
    <source>
        <dbReference type="HAMAP-Rule" id="MF_00159"/>
    </source>
</evidence>
<organism>
    <name type="scientific">Campylobacter jejuni subsp. jejuni serotype O:23/36 (strain 81-176)</name>
    <dbReference type="NCBI Taxonomy" id="354242"/>
    <lineage>
        <taxon>Bacteria</taxon>
        <taxon>Pseudomonadati</taxon>
        <taxon>Campylobacterota</taxon>
        <taxon>Epsilonproteobacteria</taxon>
        <taxon>Campylobacterales</taxon>
        <taxon>Campylobacteraceae</taxon>
        <taxon>Campylobacter</taxon>
    </lineage>
</organism>
<name>ISPG_CAMJJ</name>
<protein>
    <recommendedName>
        <fullName evidence="1">4-hydroxy-3-methylbut-2-en-1-yl diphosphate synthase (flavodoxin)</fullName>
        <ecNumber evidence="1">1.17.7.3</ecNumber>
    </recommendedName>
    <alternativeName>
        <fullName evidence="1">1-hydroxy-2-methyl-2-(E)-butenyl 4-diphosphate synthase</fullName>
    </alternativeName>
</protein>
<comment type="function">
    <text evidence="1">Converts 2C-methyl-D-erythritol 2,4-cyclodiphosphate (ME-2,4cPP) into 1-hydroxy-2-methyl-2-(E)-butenyl 4-diphosphate.</text>
</comment>
<comment type="catalytic activity">
    <reaction evidence="1">
        <text>(2E)-4-hydroxy-3-methylbut-2-enyl diphosphate + oxidized [flavodoxin] + H2O + 2 H(+) = 2-C-methyl-D-erythritol 2,4-cyclic diphosphate + reduced [flavodoxin]</text>
        <dbReference type="Rhea" id="RHEA:43604"/>
        <dbReference type="Rhea" id="RHEA-COMP:10622"/>
        <dbReference type="Rhea" id="RHEA-COMP:10623"/>
        <dbReference type="ChEBI" id="CHEBI:15377"/>
        <dbReference type="ChEBI" id="CHEBI:15378"/>
        <dbReference type="ChEBI" id="CHEBI:57618"/>
        <dbReference type="ChEBI" id="CHEBI:58210"/>
        <dbReference type="ChEBI" id="CHEBI:58483"/>
        <dbReference type="ChEBI" id="CHEBI:128753"/>
        <dbReference type="EC" id="1.17.7.3"/>
    </reaction>
</comment>
<comment type="cofactor">
    <cofactor evidence="1">
        <name>[4Fe-4S] cluster</name>
        <dbReference type="ChEBI" id="CHEBI:49883"/>
    </cofactor>
    <text evidence="1">Binds 1 [4Fe-4S] cluster.</text>
</comment>
<comment type="pathway">
    <text evidence="1">Isoprenoid biosynthesis; isopentenyl diphosphate biosynthesis via DXP pathway; isopentenyl diphosphate from 1-deoxy-D-xylulose 5-phosphate: step 5/6.</text>
</comment>
<comment type="similarity">
    <text evidence="1">Belongs to the IspG family.</text>
</comment>
<keyword id="KW-0004">4Fe-4S</keyword>
<keyword id="KW-0408">Iron</keyword>
<keyword id="KW-0411">Iron-sulfur</keyword>
<keyword id="KW-0414">Isoprene biosynthesis</keyword>
<keyword id="KW-0479">Metal-binding</keyword>
<keyword id="KW-0560">Oxidoreductase</keyword>
<sequence>MEYKRFKTRQIKVGNVLIGGDAPISVQSMLFTKTRDIEGSLEQINRLYFAGANIVRLACLDMADARALKEIKAKSPLPLIVDIHFNHNLAVYCAEFIDGVRINPGNIGSKENIKEVVKACKERGIPIRIGVNHGSIEKQFSDKFGYGVDAMLESAMYNIKLLEDLDFFDIKISMKTSDAQKTIEAYERLRPLCDYPFHLGVTEAGTKFHSTVKSSIALGNLLLKGIGDTMRVSMTGELEEEIRVARAILQDSGVQKSGVNIISCPTCGRIQSDLLSAIKIVEEKTKHIKEPLNISVMGCVVNALGEAKGADVAIAFGKNQGLVIRHGEVVAKLKESELVDRFLAEVEDEVKSRAVKE</sequence>